<evidence type="ECO:0000255" key="1"/>
<evidence type="ECO:0000256" key="2">
    <source>
        <dbReference type="SAM" id="MobiDB-lite"/>
    </source>
</evidence>
<evidence type="ECO:0000269" key="3">
    <source>
    </source>
</evidence>
<evidence type="ECO:0000269" key="4">
    <source>
    </source>
</evidence>
<evidence type="ECO:0000269" key="5">
    <source>
    </source>
</evidence>
<evidence type="ECO:0000269" key="6">
    <source>
    </source>
</evidence>
<evidence type="ECO:0000303" key="7">
    <source>
    </source>
</evidence>
<evidence type="ECO:0000303" key="8">
    <source>
    </source>
</evidence>
<evidence type="ECO:0000305" key="9"/>
<evidence type="ECO:0000305" key="10">
    <source>
    </source>
</evidence>
<protein>
    <recommendedName>
        <fullName>Solute carrier family 22 member 15</fullName>
    </recommendedName>
    <alternativeName>
        <fullName>Fly-like putative transporter 1</fullName>
        <shortName>Flipt 1</shortName>
    </alternativeName>
</protein>
<accession>Q8IZD6</accession>
<accession>A8MUR3</accession>
<accession>Q6UXP5</accession>
<accession>Q8TAL9</accession>
<accession>Q9NSH5</accession>
<feature type="chain" id="PRO_0000338619" description="Solute carrier family 22 member 15">
    <location>
        <begin position="1"/>
        <end position="547"/>
    </location>
</feature>
<feature type="transmembrane region" description="Helical" evidence="1">
    <location>
        <begin position="22"/>
        <end position="42"/>
    </location>
</feature>
<feature type="transmembrane region" description="Helical" evidence="1">
    <location>
        <begin position="111"/>
        <end position="131"/>
    </location>
</feature>
<feature type="transmembrane region" description="Helical" evidence="1">
    <location>
        <begin position="141"/>
        <end position="161"/>
    </location>
</feature>
<feature type="transmembrane region" description="Helical" evidence="1">
    <location>
        <begin position="165"/>
        <end position="187"/>
    </location>
</feature>
<feature type="transmembrane region" description="Helical" evidence="1">
    <location>
        <begin position="201"/>
        <end position="221"/>
    </location>
</feature>
<feature type="transmembrane region" description="Helical" evidence="1">
    <location>
        <begin position="226"/>
        <end position="246"/>
    </location>
</feature>
<feature type="transmembrane region" description="Helical" evidence="1">
    <location>
        <begin position="303"/>
        <end position="323"/>
    </location>
</feature>
<feature type="transmembrane region" description="Helical" evidence="1">
    <location>
        <begin position="338"/>
        <end position="358"/>
    </location>
</feature>
<feature type="transmembrane region" description="Helical" evidence="1">
    <location>
        <begin position="368"/>
        <end position="388"/>
    </location>
</feature>
<feature type="transmembrane region" description="Helical" evidence="1">
    <location>
        <begin position="401"/>
        <end position="420"/>
    </location>
</feature>
<feature type="transmembrane region" description="Helical" evidence="1">
    <location>
        <begin position="433"/>
        <end position="453"/>
    </location>
</feature>
<feature type="transmembrane region" description="Helical" evidence="1">
    <location>
        <begin position="462"/>
        <end position="482"/>
    </location>
</feature>
<feature type="region of interest" description="Disordered" evidence="2">
    <location>
        <begin position="522"/>
        <end position="547"/>
    </location>
</feature>
<feature type="compositionally biased region" description="Acidic residues" evidence="2">
    <location>
        <begin position="529"/>
        <end position="547"/>
    </location>
</feature>
<feature type="glycosylation site" description="N-linked (GlcNAc...) asparagine" evidence="1">
    <location>
        <position position="58"/>
    </location>
</feature>
<feature type="glycosylation site" description="N-linked (GlcNAc...) asparagine" evidence="1">
    <location>
        <position position="63"/>
    </location>
</feature>
<feature type="glycosylation site" description="N-linked (GlcNAc...) asparagine" evidence="1">
    <location>
        <position position="80"/>
    </location>
</feature>
<feature type="glycosylation site" description="N-linked (GlcNAc...) asparagine" evidence="1">
    <location>
        <position position="106"/>
    </location>
</feature>
<feature type="splice variant" id="VSP_034059" description="In isoform 2." evidence="7">
    <original>FI</original>
    <variation>VD</variation>
    <location>
        <begin position="244"/>
        <end position="245"/>
    </location>
</feature>
<feature type="splice variant" id="VSP_034060" description="In isoform 2." evidence="7">
    <location>
        <begin position="246"/>
        <end position="547"/>
    </location>
</feature>
<feature type="sequence variant" id="VAR_043813" description="In dbSNP:rs17852419." evidence="5">
    <original>P</original>
    <variation>Q</variation>
    <location>
        <position position="349"/>
    </location>
</feature>
<comment type="function">
    <text evidence="4 6 10">Organic zwitterion/cation transporter with apparent specificity for amino acids and their derivatives. Has low affinity for its substrates and may regulate their flux across the plasma membrane at high substrate concentrations (PubMed:33124720). Bidirectionally transports carnitine and acetylcarnitine, possibly regulating their cytosolic abundance and further fatty acid catabolism via beta oxidation (PubMed:33124720). Displays high transport activity toward zwitterionic substrates such as glycine betaine and diet-derived ergothioneine and carnosine. Can transport cations having an indole skeleton such as thiamine with lower efficiency. Does not transport agmatine (PubMed:15028572, PubMed:33124720). The transport mechanism, symport with sodium or facilitated diffusion allosterically regulated by sodium, remains to be elucidated (Probable).</text>
</comment>
<comment type="catalytic activity">
    <reaction evidence="6">
        <text>(R)-carnitine(in) = (R)-carnitine(out)</text>
        <dbReference type="Rhea" id="RHEA:34959"/>
        <dbReference type="ChEBI" id="CHEBI:16347"/>
    </reaction>
    <physiologicalReaction direction="left-to-right" evidence="10">
        <dbReference type="Rhea" id="RHEA:34960"/>
    </physiologicalReaction>
    <physiologicalReaction direction="right-to-left" evidence="10">
        <dbReference type="Rhea" id="RHEA:34961"/>
    </physiologicalReaction>
</comment>
<comment type="catalytic activity">
    <reaction evidence="6">
        <text>O-acetyl-(R)-carnitine(in) = O-acetyl-(R)-carnitine(out)</text>
        <dbReference type="Rhea" id="RHEA:74319"/>
        <dbReference type="ChEBI" id="CHEBI:57589"/>
    </reaction>
    <physiologicalReaction direction="left-to-right" evidence="10">
        <dbReference type="Rhea" id="RHEA:74320"/>
    </physiologicalReaction>
    <physiologicalReaction direction="right-to-left" evidence="10">
        <dbReference type="Rhea" id="RHEA:74321"/>
    </physiologicalReaction>
</comment>
<comment type="catalytic activity">
    <reaction evidence="6">
        <text>glycine betaine(in) = glycine betaine(out)</text>
        <dbReference type="Rhea" id="RHEA:28943"/>
        <dbReference type="ChEBI" id="CHEBI:17750"/>
    </reaction>
</comment>
<comment type="catalytic activity">
    <reaction evidence="6">
        <text>N,N-dimethylglycine(in) = N,N-dimethylglycine(out)</text>
        <dbReference type="Rhea" id="RHEA:76271"/>
        <dbReference type="ChEBI" id="CHEBI:58251"/>
    </reaction>
    <physiologicalReaction direction="right-to-left" evidence="10">
        <dbReference type="Rhea" id="RHEA:76273"/>
    </physiologicalReaction>
</comment>
<comment type="catalytic activity">
    <reaction evidence="6">
        <text>creatine(in) = creatine(out)</text>
        <dbReference type="Rhea" id="RHEA:73043"/>
        <dbReference type="ChEBI" id="CHEBI:57947"/>
    </reaction>
    <physiologicalReaction direction="right-to-left" evidence="10">
        <dbReference type="Rhea" id="RHEA:73045"/>
    </physiologicalReaction>
</comment>
<comment type="catalytic activity">
    <reaction evidence="6">
        <text>thiamine(in) = thiamine(out)</text>
        <dbReference type="Rhea" id="RHEA:34919"/>
        <dbReference type="ChEBI" id="CHEBI:18385"/>
    </reaction>
    <physiologicalReaction direction="right-to-left" evidence="10">
        <dbReference type="Rhea" id="RHEA:34921"/>
    </physiologicalReaction>
</comment>
<comment type="catalytic activity">
    <reaction evidence="6">
        <text>ergothioneine(in) = ergothioneine(out)</text>
        <dbReference type="Rhea" id="RHEA:76263"/>
        <dbReference type="ChEBI" id="CHEBI:134344"/>
    </reaction>
    <physiologicalReaction direction="right-to-left" evidence="10">
        <dbReference type="Rhea" id="RHEA:76265"/>
    </physiologicalReaction>
</comment>
<comment type="catalytic activity">
    <reaction evidence="6">
        <text>carnosine(in) = carnosine(out)</text>
        <dbReference type="Rhea" id="RHEA:76267"/>
        <dbReference type="ChEBI" id="CHEBI:57485"/>
    </reaction>
    <physiologicalReaction direction="right-to-left" evidence="10">
        <dbReference type="Rhea" id="RHEA:76269"/>
    </physiologicalReaction>
</comment>
<comment type="activity regulation">
    <text evidence="6">Inhibited by gamma-aminobutyric acid and drugs including quinidine and levofloxacin.</text>
</comment>
<comment type="biophysicochemical properties">
    <kinetics>
        <KM evidence="6">99 uM for (R)-carnitine</KM>
        <KM evidence="6">291 uM for creatine</KM>
        <KM evidence="6">354 uM for ergothioneine</KM>
        <KM evidence="6">510 uM for carnosine</KM>
        <Vmax evidence="6">873.4 pmol/min/mg enzyme toward (R)-carnitine</Vmax>
        <Vmax evidence="6">3527.6 pmol/min/mg enzyme toward creatine</Vmax>
        <Vmax evidence="6">868.0 pmol/min/mg enzyme toward ergothioneine</Vmax>
        <Vmax evidence="6">2642.0 pmol/min/mg enzyme toward carnosine</Vmax>
    </kinetics>
</comment>
<comment type="subcellular location">
    <subcellularLocation>
        <location evidence="6">Cell membrane</location>
        <topology evidence="1">Multi-pass membrane protein</topology>
    </subcellularLocation>
</comment>
<comment type="alternative products">
    <event type="alternative splicing"/>
    <isoform>
        <id>Q8IZD6-1</id>
        <name>1</name>
        <sequence type="displayed"/>
    </isoform>
    <isoform>
        <id>Q8IZD6-2</id>
        <name>2</name>
        <sequence type="described" ref="VSP_034059 VSP_034060"/>
    </isoform>
</comment>
<comment type="tissue specificity">
    <text evidence="3 4">Expressed at highest levels in kidney and brain. Expressed at high levels in skeletal muscle, heart, liver, placenta and white blood cells. Expressed at moderate levels in lung and spleen. Expressed at low levels in thymus, small intestine and colon. Expressed in several intestinal tumor cell lines.</text>
</comment>
<comment type="developmental stage">
    <text evidence="3">Expressed at low levels at 20-25 weeks of gestation in fetal brain, lung, liver and kidney.</text>
</comment>
<comment type="PTM">
    <text evidence="6">N-glycosylated.</text>
</comment>
<comment type="similarity">
    <text evidence="9">Belongs to the major facilitator (TC 2.A.1) superfamily. Organic cation transporter (TC 2.A.1.19) family.</text>
</comment>
<comment type="sequence caution" evidence="9">
    <conflict type="erroneous initiation">
        <sequence resource="EMBL-CDS" id="AAH26358"/>
    </conflict>
    <text>Truncated N-terminus.</text>
</comment>
<comment type="sequence caution" evidence="9">
    <conflict type="frameshift">
        <sequence resource="EMBL-CDS" id="AAH26358"/>
    </conflict>
</comment>
<gene>
    <name evidence="8" type="primary">SLC22A15</name>
    <name type="synonym">FLIPT1</name>
    <name type="ORF">UNQ9429/PRO34686</name>
</gene>
<reference key="1">
    <citation type="journal article" date="2002" name="Biochem. Biophys. Res. Commun.">
        <title>Novel human cDNAs homologous to Drosophila Orct and mammalian carnitine transporters.</title>
        <authorList>
            <person name="Eraly S.A."/>
            <person name="Nigam S.K."/>
        </authorList>
    </citation>
    <scope>NUCLEOTIDE SEQUENCE [MRNA] (ISOFORM 1)</scope>
    <scope>TISSUE SPECIFICITY</scope>
    <scope>DEVELOPMENTAL STAGE</scope>
    <source>
        <tissue>Kidney</tissue>
    </source>
</reference>
<reference key="2">
    <citation type="journal article" date="2003" name="Genome Res.">
        <title>The secreted protein discovery initiative (SPDI), a large-scale effort to identify novel human secreted and transmembrane proteins: a bioinformatics assessment.</title>
        <authorList>
            <person name="Clark H.F."/>
            <person name="Gurney A.L."/>
            <person name="Abaya E."/>
            <person name="Baker K."/>
            <person name="Baldwin D.T."/>
            <person name="Brush J."/>
            <person name="Chen J."/>
            <person name="Chow B."/>
            <person name="Chui C."/>
            <person name="Crowley C."/>
            <person name="Currell B."/>
            <person name="Deuel B."/>
            <person name="Dowd P."/>
            <person name="Eaton D."/>
            <person name="Foster J.S."/>
            <person name="Grimaldi C."/>
            <person name="Gu Q."/>
            <person name="Hass P.E."/>
            <person name="Heldens S."/>
            <person name="Huang A."/>
            <person name="Kim H.S."/>
            <person name="Klimowski L."/>
            <person name="Jin Y."/>
            <person name="Johnson S."/>
            <person name="Lee J."/>
            <person name="Lewis L."/>
            <person name="Liao D."/>
            <person name="Mark M.R."/>
            <person name="Robbie E."/>
            <person name="Sanchez C."/>
            <person name="Schoenfeld J."/>
            <person name="Seshagiri S."/>
            <person name="Simmons L."/>
            <person name="Singh J."/>
            <person name="Smith V."/>
            <person name="Stinson J."/>
            <person name="Vagts A."/>
            <person name="Vandlen R.L."/>
            <person name="Watanabe C."/>
            <person name="Wieand D."/>
            <person name="Woods K."/>
            <person name="Xie M.-H."/>
            <person name="Yansura D.G."/>
            <person name="Yi S."/>
            <person name="Yu G."/>
            <person name="Yuan J."/>
            <person name="Zhang M."/>
            <person name="Zhang Z."/>
            <person name="Goddard A.D."/>
            <person name="Wood W.I."/>
            <person name="Godowski P.J."/>
            <person name="Gray A.M."/>
        </authorList>
    </citation>
    <scope>NUCLEOTIDE SEQUENCE [LARGE SCALE MRNA] (ISOFORM 2)</scope>
</reference>
<reference key="3">
    <citation type="journal article" date="2006" name="Nature">
        <title>The DNA sequence and biological annotation of human chromosome 1.</title>
        <authorList>
            <person name="Gregory S.G."/>
            <person name="Barlow K.F."/>
            <person name="McLay K.E."/>
            <person name="Kaul R."/>
            <person name="Swarbreck D."/>
            <person name="Dunham A."/>
            <person name="Scott C.E."/>
            <person name="Howe K.L."/>
            <person name="Woodfine K."/>
            <person name="Spencer C.C.A."/>
            <person name="Jones M.C."/>
            <person name="Gillson C."/>
            <person name="Searle S."/>
            <person name="Zhou Y."/>
            <person name="Kokocinski F."/>
            <person name="McDonald L."/>
            <person name="Evans R."/>
            <person name="Phillips K."/>
            <person name="Atkinson A."/>
            <person name="Cooper R."/>
            <person name="Jones C."/>
            <person name="Hall R.E."/>
            <person name="Andrews T.D."/>
            <person name="Lloyd C."/>
            <person name="Ainscough R."/>
            <person name="Almeida J.P."/>
            <person name="Ambrose K.D."/>
            <person name="Anderson F."/>
            <person name="Andrew R.W."/>
            <person name="Ashwell R.I.S."/>
            <person name="Aubin K."/>
            <person name="Babbage A.K."/>
            <person name="Bagguley C.L."/>
            <person name="Bailey J."/>
            <person name="Beasley H."/>
            <person name="Bethel G."/>
            <person name="Bird C.P."/>
            <person name="Bray-Allen S."/>
            <person name="Brown J.Y."/>
            <person name="Brown A.J."/>
            <person name="Buckley D."/>
            <person name="Burton J."/>
            <person name="Bye J."/>
            <person name="Carder C."/>
            <person name="Chapman J.C."/>
            <person name="Clark S.Y."/>
            <person name="Clarke G."/>
            <person name="Clee C."/>
            <person name="Cobley V."/>
            <person name="Collier R.E."/>
            <person name="Corby N."/>
            <person name="Coville G.J."/>
            <person name="Davies J."/>
            <person name="Deadman R."/>
            <person name="Dunn M."/>
            <person name="Earthrowl M."/>
            <person name="Ellington A.G."/>
            <person name="Errington H."/>
            <person name="Frankish A."/>
            <person name="Frankland J."/>
            <person name="French L."/>
            <person name="Garner P."/>
            <person name="Garnett J."/>
            <person name="Gay L."/>
            <person name="Ghori M.R.J."/>
            <person name="Gibson R."/>
            <person name="Gilby L.M."/>
            <person name="Gillett W."/>
            <person name="Glithero R.J."/>
            <person name="Grafham D.V."/>
            <person name="Griffiths C."/>
            <person name="Griffiths-Jones S."/>
            <person name="Grocock R."/>
            <person name="Hammond S."/>
            <person name="Harrison E.S.I."/>
            <person name="Hart E."/>
            <person name="Haugen E."/>
            <person name="Heath P.D."/>
            <person name="Holmes S."/>
            <person name="Holt K."/>
            <person name="Howden P.J."/>
            <person name="Hunt A.R."/>
            <person name="Hunt S.E."/>
            <person name="Hunter G."/>
            <person name="Isherwood J."/>
            <person name="James R."/>
            <person name="Johnson C."/>
            <person name="Johnson D."/>
            <person name="Joy A."/>
            <person name="Kay M."/>
            <person name="Kershaw J.K."/>
            <person name="Kibukawa M."/>
            <person name="Kimberley A.M."/>
            <person name="King A."/>
            <person name="Knights A.J."/>
            <person name="Lad H."/>
            <person name="Laird G."/>
            <person name="Lawlor S."/>
            <person name="Leongamornlert D.A."/>
            <person name="Lloyd D.M."/>
            <person name="Loveland J."/>
            <person name="Lovell J."/>
            <person name="Lush M.J."/>
            <person name="Lyne R."/>
            <person name="Martin S."/>
            <person name="Mashreghi-Mohammadi M."/>
            <person name="Matthews L."/>
            <person name="Matthews N.S.W."/>
            <person name="McLaren S."/>
            <person name="Milne S."/>
            <person name="Mistry S."/>
            <person name="Moore M.J.F."/>
            <person name="Nickerson T."/>
            <person name="O'Dell C.N."/>
            <person name="Oliver K."/>
            <person name="Palmeiri A."/>
            <person name="Palmer S.A."/>
            <person name="Parker A."/>
            <person name="Patel D."/>
            <person name="Pearce A.V."/>
            <person name="Peck A.I."/>
            <person name="Pelan S."/>
            <person name="Phelps K."/>
            <person name="Phillimore B.J."/>
            <person name="Plumb R."/>
            <person name="Rajan J."/>
            <person name="Raymond C."/>
            <person name="Rouse G."/>
            <person name="Saenphimmachak C."/>
            <person name="Sehra H.K."/>
            <person name="Sheridan E."/>
            <person name="Shownkeen R."/>
            <person name="Sims S."/>
            <person name="Skuce C.D."/>
            <person name="Smith M."/>
            <person name="Steward C."/>
            <person name="Subramanian S."/>
            <person name="Sycamore N."/>
            <person name="Tracey A."/>
            <person name="Tromans A."/>
            <person name="Van Helmond Z."/>
            <person name="Wall M."/>
            <person name="Wallis J.M."/>
            <person name="White S."/>
            <person name="Whitehead S.L."/>
            <person name="Wilkinson J.E."/>
            <person name="Willey D.L."/>
            <person name="Williams H."/>
            <person name="Wilming L."/>
            <person name="Wray P.W."/>
            <person name="Wu Z."/>
            <person name="Coulson A."/>
            <person name="Vaudin M."/>
            <person name="Sulston J.E."/>
            <person name="Durbin R.M."/>
            <person name="Hubbard T."/>
            <person name="Wooster R."/>
            <person name="Dunham I."/>
            <person name="Carter N.P."/>
            <person name="McVean G."/>
            <person name="Ross M.T."/>
            <person name="Harrow J."/>
            <person name="Olson M.V."/>
            <person name="Beck S."/>
            <person name="Rogers J."/>
            <person name="Bentley D.R."/>
        </authorList>
    </citation>
    <scope>NUCLEOTIDE SEQUENCE [LARGE SCALE GENOMIC DNA]</scope>
</reference>
<reference key="4">
    <citation type="submission" date="2005-07" db="EMBL/GenBank/DDBJ databases">
        <authorList>
            <person name="Mural R.J."/>
            <person name="Istrail S."/>
            <person name="Sutton G.G."/>
            <person name="Florea L."/>
            <person name="Halpern A.L."/>
            <person name="Mobarry C.M."/>
            <person name="Lippert R."/>
            <person name="Walenz B."/>
            <person name="Shatkay H."/>
            <person name="Dew I."/>
            <person name="Miller J.R."/>
            <person name="Flanigan M.J."/>
            <person name="Edwards N.J."/>
            <person name="Bolanos R."/>
            <person name="Fasulo D."/>
            <person name="Halldorsson B.V."/>
            <person name="Hannenhalli S."/>
            <person name="Turner R."/>
            <person name="Yooseph S."/>
            <person name="Lu F."/>
            <person name="Nusskern D.R."/>
            <person name="Shue B.C."/>
            <person name="Zheng X.H."/>
            <person name="Zhong F."/>
            <person name="Delcher A.L."/>
            <person name="Huson D.H."/>
            <person name="Kravitz S.A."/>
            <person name="Mouchard L."/>
            <person name="Reinert K."/>
            <person name="Remington K.A."/>
            <person name="Clark A.G."/>
            <person name="Waterman M.S."/>
            <person name="Eichler E.E."/>
            <person name="Adams M.D."/>
            <person name="Hunkapiller M.W."/>
            <person name="Myers E.W."/>
            <person name="Venter J.C."/>
        </authorList>
    </citation>
    <scope>NUCLEOTIDE SEQUENCE [LARGE SCALE GENOMIC DNA]</scope>
</reference>
<reference key="5">
    <citation type="journal article" date="2004" name="Genome Res.">
        <title>The status, quality, and expansion of the NIH full-length cDNA project: the Mammalian Gene Collection (MGC).</title>
        <authorList>
            <consortium name="The MGC Project Team"/>
        </authorList>
    </citation>
    <scope>NUCLEOTIDE SEQUENCE [LARGE SCALE MRNA] (ISOFORM 1)</scope>
    <scope>VARIANT GLN-349</scope>
    <source>
        <tissue>Brain</tissue>
    </source>
</reference>
<reference key="6">
    <citation type="journal article" date="2007" name="BMC Genomics">
        <title>The full-ORF clone resource of the German cDNA consortium.</title>
        <authorList>
            <person name="Bechtel S."/>
            <person name="Rosenfelder H."/>
            <person name="Duda A."/>
            <person name="Schmidt C.P."/>
            <person name="Ernst U."/>
            <person name="Wellenreuther R."/>
            <person name="Mehrle A."/>
            <person name="Schuster C."/>
            <person name="Bahr A."/>
            <person name="Bloecker H."/>
            <person name="Heubner D."/>
            <person name="Hoerlein A."/>
            <person name="Michel G."/>
            <person name="Wedler H."/>
            <person name="Koehrer K."/>
            <person name="Ottenwaelder B."/>
            <person name="Poustka A."/>
            <person name="Wiemann S."/>
            <person name="Schupp I."/>
        </authorList>
    </citation>
    <scope>NUCLEOTIDE SEQUENCE [LARGE SCALE MRNA] OF 391-547 (ISOFORM 1)</scope>
    <source>
        <tissue>Amygdala</tissue>
    </source>
</reference>
<reference key="7">
    <citation type="journal article" date="2003" name="Ann. N. Y. Acad. Sci.">
        <title>Identification and pharmacological characterization of a specific agmatine transport system in human tumor cell lines.</title>
        <authorList>
            <person name="Molderings G.J."/>
            <person name="Bruss M."/>
            <person name="Bonisch H."/>
            <person name="Gothert M."/>
        </authorList>
    </citation>
    <scope>FUNCTION</scope>
    <scope>TISSUE SPECIFICITY</scope>
</reference>
<reference key="8">
    <citation type="journal article" date="2020" name="FASEB J.">
        <title>Deorphaning a solute carrier 22 family member, SLC22A15, through functional genomic studies.</title>
        <authorList>
            <person name="Yee S.W."/>
            <person name="Buitrago D."/>
            <person name="Stecula A."/>
            <person name="Ngo H.X."/>
            <person name="Chien H.C."/>
            <person name="Zou L."/>
            <person name="Koleske M.L."/>
            <person name="Giacomini K.M."/>
        </authorList>
    </citation>
    <scope>FUNCTION</scope>
    <scope>TRANSPORTER ACTIVITY</scope>
    <scope>ACTIVITY REGULATION</scope>
    <scope>BIOPHYSICOCHEMICAL PROPERTIES</scope>
    <scope>SUBCELLULAR LOCATION</scope>
    <scope>GLYCOSYLATION</scope>
</reference>
<name>S22AF_HUMAN</name>
<proteinExistence type="evidence at protein level"/>
<sequence length="547" mass="60540">MEVEEAFQAVGEMGIYQMYLCFLLAVLLQLYVATEAILIALVGATPSYHWDLAELLPNQSHGNQSAGEDQAFGDWLLTANGSEIHKHVHFSSSFTSIASEWFLIANRSYKVSAASSFFFSGVFVGVISFGQLSDRFGRKKVYLTGFALDILFAIANGFSPSYEFFAVTRFLVGMMNGGMSLVAFVLLNECVGTAYWALAGSIGGLFFAVGIAQYALLGYFIRSWRTLAILVNLQGTVVFLLSLFIPESPRWLYSQGRLSEAEEALYLIAKRNRKLKCTFSLTHPANRSCRETGSFLDLFRYRVLLGHTLILMFIWFVCSLVYYGLTLSAGDLGGSIYANLALSGLIEIPSYPLCIYLINQKWFGRKRTLSAFLCLGGLACLIVMFLPEKKDTGVFAVVNSHSLSLLGKLTISAAFNIVYIYTSELYPTVIRNVGLGTCSMFSRVGGIIAPFIPSLKYVQWSLPFIVFGATGLTSGLLSLLLPETLNSPLLETFSDLQVYSYRRLGEEALSLQALDPQQCVDKESSLGSESEEEEEFYDADEETQMIK</sequence>
<keyword id="KW-0025">Alternative splicing</keyword>
<keyword id="KW-0029">Amino-acid transport</keyword>
<keyword id="KW-1003">Cell membrane</keyword>
<keyword id="KW-0325">Glycoprotein</keyword>
<keyword id="KW-0406">Ion transport</keyword>
<keyword id="KW-0472">Membrane</keyword>
<keyword id="KW-1267">Proteomics identification</keyword>
<keyword id="KW-1185">Reference proteome</keyword>
<keyword id="KW-0812">Transmembrane</keyword>
<keyword id="KW-1133">Transmembrane helix</keyword>
<keyword id="KW-0813">Transport</keyword>
<dbReference type="EMBL" id="AY145501">
    <property type="protein sequence ID" value="AAN52927.1"/>
    <property type="molecule type" value="mRNA"/>
</dbReference>
<dbReference type="EMBL" id="AY358258">
    <property type="protein sequence ID" value="AAQ88625.1"/>
    <property type="molecule type" value="mRNA"/>
</dbReference>
<dbReference type="EMBL" id="AL357137">
    <property type="status" value="NOT_ANNOTATED_CDS"/>
    <property type="molecule type" value="Genomic_DNA"/>
</dbReference>
<dbReference type="EMBL" id="AL365318">
    <property type="status" value="NOT_ANNOTATED_CDS"/>
    <property type="molecule type" value="Genomic_DNA"/>
</dbReference>
<dbReference type="EMBL" id="CH471122">
    <property type="protein sequence ID" value="EAW56640.1"/>
    <property type="molecule type" value="Genomic_DNA"/>
</dbReference>
<dbReference type="EMBL" id="BC026358">
    <property type="protein sequence ID" value="AAH26358.1"/>
    <property type="status" value="ALT_SEQ"/>
    <property type="molecule type" value="mRNA"/>
</dbReference>
<dbReference type="EMBL" id="AL353933">
    <property type="protein sequence ID" value="CAB89246.1"/>
    <property type="molecule type" value="mRNA"/>
</dbReference>
<dbReference type="CCDS" id="CCDS44198.1">
    <molecule id="Q8IZD6-1"/>
</dbReference>
<dbReference type="PIR" id="T48683">
    <property type="entry name" value="T48683"/>
</dbReference>
<dbReference type="RefSeq" id="NP_060890.2">
    <molecule id="Q8IZD6-1"/>
    <property type="nucleotide sequence ID" value="NM_018420.3"/>
</dbReference>
<dbReference type="RefSeq" id="XP_047280378.1">
    <molecule id="Q8IZD6-2"/>
    <property type="nucleotide sequence ID" value="XM_047424422.1"/>
</dbReference>
<dbReference type="RefSeq" id="XP_054193495.1">
    <molecule id="Q8IZD6-2"/>
    <property type="nucleotide sequence ID" value="XM_054337520.1"/>
</dbReference>
<dbReference type="SMR" id="Q8IZD6"/>
<dbReference type="BioGRID" id="120636">
    <property type="interactions" value="22"/>
</dbReference>
<dbReference type="FunCoup" id="Q8IZD6">
    <property type="interactions" value="26"/>
</dbReference>
<dbReference type="IntAct" id="Q8IZD6">
    <property type="interactions" value="21"/>
</dbReference>
<dbReference type="STRING" id="9606.ENSP00000358515"/>
<dbReference type="TCDB" id="2.A.1.19.32">
    <property type="family name" value="the major facilitator superfamily (mfs)"/>
</dbReference>
<dbReference type="GlyCosmos" id="Q8IZD6">
    <property type="glycosylation" value="4 sites, No reported glycans"/>
</dbReference>
<dbReference type="GlyGen" id="Q8IZD6">
    <property type="glycosylation" value="5 sites"/>
</dbReference>
<dbReference type="iPTMnet" id="Q8IZD6"/>
<dbReference type="PhosphoSitePlus" id="Q8IZD6"/>
<dbReference type="BioMuta" id="SLC22A15"/>
<dbReference type="DMDM" id="74750790"/>
<dbReference type="MassIVE" id="Q8IZD6"/>
<dbReference type="PaxDb" id="9606-ENSP00000358515"/>
<dbReference type="PeptideAtlas" id="Q8IZD6"/>
<dbReference type="ProteomicsDB" id="71330">
    <molecule id="Q8IZD6-1"/>
</dbReference>
<dbReference type="Antibodypedia" id="9786">
    <property type="antibodies" value="66 antibodies from 18 providers"/>
</dbReference>
<dbReference type="DNASU" id="55356"/>
<dbReference type="Ensembl" id="ENST00000369502.1">
    <molecule id="Q8IZD6-2"/>
    <property type="protein sequence ID" value="ENSP00000358514.1"/>
    <property type="gene ID" value="ENSG00000163393.13"/>
</dbReference>
<dbReference type="Ensembl" id="ENST00000369503.9">
    <molecule id="Q8IZD6-1"/>
    <property type="protein sequence ID" value="ENSP00000358515.4"/>
    <property type="gene ID" value="ENSG00000163393.13"/>
</dbReference>
<dbReference type="GeneID" id="55356"/>
<dbReference type="KEGG" id="hsa:55356"/>
<dbReference type="MANE-Select" id="ENST00000369503.9">
    <property type="protein sequence ID" value="ENSP00000358515.4"/>
    <property type="RefSeq nucleotide sequence ID" value="NM_018420.3"/>
    <property type="RefSeq protein sequence ID" value="NP_060890.2"/>
</dbReference>
<dbReference type="UCSC" id="uc001ega.3">
    <molecule id="Q8IZD6-1"/>
    <property type="organism name" value="human"/>
</dbReference>
<dbReference type="AGR" id="HGNC:20301"/>
<dbReference type="CTD" id="55356"/>
<dbReference type="DisGeNET" id="55356"/>
<dbReference type="GeneCards" id="SLC22A15"/>
<dbReference type="HGNC" id="HGNC:20301">
    <property type="gene designation" value="SLC22A15"/>
</dbReference>
<dbReference type="HPA" id="ENSG00000163393">
    <property type="expression patterns" value="Tissue enhanced (bone)"/>
</dbReference>
<dbReference type="MIM" id="608275">
    <property type="type" value="gene"/>
</dbReference>
<dbReference type="neXtProt" id="NX_Q8IZD6"/>
<dbReference type="OpenTargets" id="ENSG00000163393"/>
<dbReference type="PharmGKB" id="PA134870374"/>
<dbReference type="VEuPathDB" id="HostDB:ENSG00000163393"/>
<dbReference type="eggNOG" id="KOG0255">
    <property type="taxonomic scope" value="Eukaryota"/>
</dbReference>
<dbReference type="GeneTree" id="ENSGT00940000160364"/>
<dbReference type="HOGENOM" id="CLU_001265_33_7_1"/>
<dbReference type="InParanoid" id="Q8IZD6"/>
<dbReference type="OMA" id="FPMETRA"/>
<dbReference type="OrthoDB" id="5296287at2759"/>
<dbReference type="PAN-GO" id="Q8IZD6">
    <property type="GO annotations" value="0 GO annotations based on evolutionary models"/>
</dbReference>
<dbReference type="PhylomeDB" id="Q8IZD6"/>
<dbReference type="TreeFam" id="TF315847"/>
<dbReference type="PathwayCommons" id="Q8IZD6"/>
<dbReference type="Reactome" id="R-HSA-549127">
    <property type="pathway name" value="Organic cation transport"/>
</dbReference>
<dbReference type="BioGRID-ORCS" id="55356">
    <property type="hits" value="8 hits in 1146 CRISPR screens"/>
</dbReference>
<dbReference type="ChiTaRS" id="SLC22A15">
    <property type="organism name" value="human"/>
</dbReference>
<dbReference type="GenomeRNAi" id="55356"/>
<dbReference type="Pharos" id="Q8IZD6">
    <property type="development level" value="Tdark"/>
</dbReference>
<dbReference type="PRO" id="PR:Q8IZD6"/>
<dbReference type="Proteomes" id="UP000005640">
    <property type="component" value="Chromosome 1"/>
</dbReference>
<dbReference type="RNAct" id="Q8IZD6">
    <property type="molecule type" value="protein"/>
</dbReference>
<dbReference type="Bgee" id="ENSG00000163393">
    <property type="expression patterns" value="Expressed in corpus callosum and 147 other cell types or tissues"/>
</dbReference>
<dbReference type="GO" id="GO:0005886">
    <property type="term" value="C:plasma membrane"/>
    <property type="evidence" value="ECO:0000314"/>
    <property type="project" value="UniProtKB"/>
</dbReference>
<dbReference type="GO" id="GO:0015199">
    <property type="term" value="F:amino-acid betaine transmembrane transporter activity"/>
    <property type="evidence" value="ECO:0000314"/>
    <property type="project" value="UniProtKB"/>
</dbReference>
<dbReference type="GO" id="GO:0006865">
    <property type="term" value="P:amino acid transport"/>
    <property type="evidence" value="ECO:0007669"/>
    <property type="project" value="UniProtKB-KW"/>
</dbReference>
<dbReference type="GO" id="GO:0006811">
    <property type="term" value="P:monoatomic ion transport"/>
    <property type="evidence" value="ECO:0007669"/>
    <property type="project" value="UniProtKB-KW"/>
</dbReference>
<dbReference type="CDD" id="cd17377">
    <property type="entry name" value="MFS_SLC22A15"/>
    <property type="match status" value="1"/>
</dbReference>
<dbReference type="Gene3D" id="1.20.1250.20">
    <property type="entry name" value="MFS general substrate transporter like domains"/>
    <property type="match status" value="1"/>
</dbReference>
<dbReference type="InterPro" id="IPR020846">
    <property type="entry name" value="MFS_dom"/>
</dbReference>
<dbReference type="InterPro" id="IPR005828">
    <property type="entry name" value="MFS_sugar_transport-like"/>
</dbReference>
<dbReference type="InterPro" id="IPR036259">
    <property type="entry name" value="MFS_trans_sf"/>
</dbReference>
<dbReference type="PANTHER" id="PTHR24064">
    <property type="entry name" value="SOLUTE CARRIER FAMILY 22 MEMBER"/>
    <property type="match status" value="1"/>
</dbReference>
<dbReference type="Pfam" id="PF00083">
    <property type="entry name" value="Sugar_tr"/>
    <property type="match status" value="1"/>
</dbReference>
<dbReference type="SUPFAM" id="SSF103473">
    <property type="entry name" value="MFS general substrate transporter"/>
    <property type="match status" value="1"/>
</dbReference>
<dbReference type="PROSITE" id="PS50850">
    <property type="entry name" value="MFS"/>
    <property type="match status" value="1"/>
</dbReference>
<organism>
    <name type="scientific">Homo sapiens</name>
    <name type="common">Human</name>
    <dbReference type="NCBI Taxonomy" id="9606"/>
    <lineage>
        <taxon>Eukaryota</taxon>
        <taxon>Metazoa</taxon>
        <taxon>Chordata</taxon>
        <taxon>Craniata</taxon>
        <taxon>Vertebrata</taxon>
        <taxon>Euteleostomi</taxon>
        <taxon>Mammalia</taxon>
        <taxon>Eutheria</taxon>
        <taxon>Euarchontoglires</taxon>
        <taxon>Primates</taxon>
        <taxon>Haplorrhini</taxon>
        <taxon>Catarrhini</taxon>
        <taxon>Hominidae</taxon>
        <taxon>Homo</taxon>
    </lineage>
</organism>